<name>LR2BP_HUMAN</name>
<organism>
    <name type="scientific">Homo sapiens</name>
    <name type="common">Human</name>
    <dbReference type="NCBI Taxonomy" id="9606"/>
    <lineage>
        <taxon>Eukaryota</taxon>
        <taxon>Metazoa</taxon>
        <taxon>Chordata</taxon>
        <taxon>Craniata</taxon>
        <taxon>Vertebrata</taxon>
        <taxon>Euteleostomi</taxon>
        <taxon>Mammalia</taxon>
        <taxon>Eutheria</taxon>
        <taxon>Euarchontoglires</taxon>
        <taxon>Primates</taxon>
        <taxon>Haplorrhini</taxon>
        <taxon>Catarrhini</taxon>
        <taxon>Hominidae</taxon>
        <taxon>Homo</taxon>
    </lineage>
</organism>
<dbReference type="EMBL" id="AB037746">
    <property type="protein sequence ID" value="BAA92563.1"/>
    <property type="status" value="ALT_INIT"/>
    <property type="molecule type" value="mRNA"/>
</dbReference>
<dbReference type="EMBL" id="AK126913">
    <property type="protein sequence ID" value="BAG54395.1"/>
    <property type="molecule type" value="mRNA"/>
</dbReference>
<dbReference type="EMBL" id="AL161975">
    <property type="protein sequence ID" value="CAB82313.2"/>
    <property type="molecule type" value="mRNA"/>
</dbReference>
<dbReference type="EMBL" id="AC106897">
    <property type="status" value="NOT_ANNOTATED_CDS"/>
    <property type="molecule type" value="Genomic_DNA"/>
</dbReference>
<dbReference type="EMBL" id="CH471056">
    <property type="protein sequence ID" value="EAX04650.1"/>
    <property type="molecule type" value="Genomic_DNA"/>
</dbReference>
<dbReference type="EMBL" id="BC150161">
    <property type="protein sequence ID" value="AAI50162.1"/>
    <property type="molecule type" value="mRNA"/>
</dbReference>
<dbReference type="EMBL" id="BC152444">
    <property type="protein sequence ID" value="AAI52445.1"/>
    <property type="molecule type" value="mRNA"/>
</dbReference>
<dbReference type="CCDS" id="CCDS3840.1">
    <molecule id="Q9P2M1-1"/>
</dbReference>
<dbReference type="PIR" id="T47138">
    <property type="entry name" value="T47138"/>
</dbReference>
<dbReference type="RefSeq" id="NP_001364369.1">
    <molecule id="Q9P2M1-1"/>
    <property type="nucleotide sequence ID" value="NM_001377440.1"/>
</dbReference>
<dbReference type="RefSeq" id="NP_001372530.1">
    <molecule id="Q9P2M1-1"/>
    <property type="nucleotide sequence ID" value="NM_001385601.1"/>
</dbReference>
<dbReference type="RefSeq" id="NP_060879.2">
    <molecule id="Q9P2M1-1"/>
    <property type="nucleotide sequence ID" value="NM_018409.3"/>
</dbReference>
<dbReference type="RefSeq" id="XP_006714323.1">
    <property type="nucleotide sequence ID" value="XM_006714260.3"/>
</dbReference>
<dbReference type="RefSeq" id="XP_016863899.1">
    <molecule id="Q9P2M1-1"/>
    <property type="nucleotide sequence ID" value="XM_017008410.3"/>
</dbReference>
<dbReference type="RefSeq" id="XP_024309902.1">
    <molecule id="Q9P2M1-1"/>
    <property type="nucleotide sequence ID" value="XM_024454134.2"/>
</dbReference>
<dbReference type="RefSeq" id="XP_024309903.1">
    <molecule id="Q9P2M1-1"/>
    <property type="nucleotide sequence ID" value="XM_024454135.2"/>
</dbReference>
<dbReference type="SMR" id="Q9P2M1"/>
<dbReference type="BioGRID" id="120916">
    <property type="interactions" value="23"/>
</dbReference>
<dbReference type="FunCoup" id="Q9P2M1">
    <property type="interactions" value="62"/>
</dbReference>
<dbReference type="IntAct" id="Q9P2M1">
    <property type="interactions" value="20"/>
</dbReference>
<dbReference type="STRING" id="9606.ENSP00000332681"/>
<dbReference type="iPTMnet" id="Q9P2M1"/>
<dbReference type="PhosphoSitePlus" id="Q9P2M1"/>
<dbReference type="BioMuta" id="LRP2BP"/>
<dbReference type="DMDM" id="166199159"/>
<dbReference type="MassIVE" id="Q9P2M1"/>
<dbReference type="PaxDb" id="9606-ENSP00000332681"/>
<dbReference type="PeptideAtlas" id="Q9P2M1"/>
<dbReference type="ProteomicsDB" id="83845">
    <molecule id="Q9P2M1-1"/>
</dbReference>
<dbReference type="ProteomicsDB" id="83846">
    <molecule id="Q9P2M1-2"/>
</dbReference>
<dbReference type="Antibodypedia" id="28937">
    <property type="antibodies" value="61 antibodies from 17 providers"/>
</dbReference>
<dbReference type="DNASU" id="55805"/>
<dbReference type="Ensembl" id="ENST00000328559.11">
    <molecule id="Q9P2M1-1"/>
    <property type="protein sequence ID" value="ENSP00000332681.7"/>
    <property type="gene ID" value="ENSG00000109771.16"/>
</dbReference>
<dbReference type="Ensembl" id="ENST00000505916.6">
    <molecule id="Q9P2M1-1"/>
    <property type="protein sequence ID" value="ENSP00000426203.1"/>
    <property type="gene ID" value="ENSG00000109771.16"/>
</dbReference>
<dbReference type="GeneID" id="55805"/>
<dbReference type="KEGG" id="hsa:55805"/>
<dbReference type="MANE-Select" id="ENST00000505916.6">
    <property type="protein sequence ID" value="ENSP00000426203.1"/>
    <property type="RefSeq nucleotide sequence ID" value="NM_001377440.1"/>
    <property type="RefSeq protein sequence ID" value="NP_001364369.1"/>
</dbReference>
<dbReference type="UCSC" id="uc003ixj.3">
    <molecule id="Q9P2M1-1"/>
    <property type="organism name" value="human"/>
</dbReference>
<dbReference type="AGR" id="HGNC:25434"/>
<dbReference type="CTD" id="55805"/>
<dbReference type="DisGeNET" id="55805"/>
<dbReference type="GeneCards" id="LRP2BP"/>
<dbReference type="HGNC" id="HGNC:25434">
    <property type="gene designation" value="LRP2BP"/>
</dbReference>
<dbReference type="HPA" id="ENSG00000109771">
    <property type="expression patterns" value="Tissue enhanced (pituitary gland, retina)"/>
</dbReference>
<dbReference type="MIM" id="619020">
    <property type="type" value="gene"/>
</dbReference>
<dbReference type="neXtProt" id="NX_Q9P2M1"/>
<dbReference type="OpenTargets" id="ENSG00000109771"/>
<dbReference type="PharmGKB" id="PA142671538"/>
<dbReference type="VEuPathDB" id="HostDB:ENSG00000109771"/>
<dbReference type="eggNOG" id="KOG1550">
    <property type="taxonomic scope" value="Eukaryota"/>
</dbReference>
<dbReference type="GeneTree" id="ENSGT00390000013490"/>
<dbReference type="InParanoid" id="Q9P2M1"/>
<dbReference type="OMA" id="TDHYTHA"/>
<dbReference type="OrthoDB" id="2384430at2759"/>
<dbReference type="PAN-GO" id="Q9P2M1">
    <property type="GO annotations" value="0 GO annotations based on evolutionary models"/>
</dbReference>
<dbReference type="PhylomeDB" id="Q9P2M1"/>
<dbReference type="TreeFam" id="TF315257"/>
<dbReference type="PathwayCommons" id="Q9P2M1"/>
<dbReference type="SignaLink" id="Q9P2M1"/>
<dbReference type="BioGRID-ORCS" id="55805">
    <property type="hits" value="7 hits in 1144 CRISPR screens"/>
</dbReference>
<dbReference type="GenomeRNAi" id="55805"/>
<dbReference type="Pharos" id="Q9P2M1">
    <property type="development level" value="Tbio"/>
</dbReference>
<dbReference type="PRO" id="PR:Q9P2M1"/>
<dbReference type="Proteomes" id="UP000005640">
    <property type="component" value="Chromosome 4"/>
</dbReference>
<dbReference type="RNAct" id="Q9P2M1">
    <property type="molecule type" value="protein"/>
</dbReference>
<dbReference type="Bgee" id="ENSG00000109771">
    <property type="expression patterns" value="Expressed in sperm and 107 other cell types or tissues"/>
</dbReference>
<dbReference type="ExpressionAtlas" id="Q9P2M1">
    <property type="expression patterns" value="baseline and differential"/>
</dbReference>
<dbReference type="GO" id="GO:0005737">
    <property type="term" value="C:cytoplasm"/>
    <property type="evidence" value="ECO:0007669"/>
    <property type="project" value="UniProtKB-SubCell"/>
</dbReference>
<dbReference type="Gene3D" id="1.25.40.10">
    <property type="entry name" value="Tetratricopeptide repeat domain"/>
    <property type="match status" value="1"/>
</dbReference>
<dbReference type="InterPro" id="IPR052323">
    <property type="entry name" value="LRP2-binding"/>
</dbReference>
<dbReference type="InterPro" id="IPR006597">
    <property type="entry name" value="Sel1-like"/>
</dbReference>
<dbReference type="InterPro" id="IPR011990">
    <property type="entry name" value="TPR-like_helical_dom_sf"/>
</dbReference>
<dbReference type="InterPro" id="IPR019734">
    <property type="entry name" value="TPR_rpt"/>
</dbReference>
<dbReference type="PANTHER" id="PTHR44554">
    <property type="entry name" value="LRP2-BINDING PROTEIN"/>
    <property type="match status" value="1"/>
</dbReference>
<dbReference type="PANTHER" id="PTHR44554:SF1">
    <property type="entry name" value="LRP2-BINDING PROTEIN"/>
    <property type="match status" value="1"/>
</dbReference>
<dbReference type="Pfam" id="PF08238">
    <property type="entry name" value="Sel1"/>
    <property type="match status" value="5"/>
</dbReference>
<dbReference type="SMART" id="SM00671">
    <property type="entry name" value="SEL1"/>
    <property type="match status" value="5"/>
</dbReference>
<dbReference type="SUPFAM" id="SSF81901">
    <property type="entry name" value="HCP-like"/>
    <property type="match status" value="1"/>
</dbReference>
<dbReference type="PROSITE" id="PS50005">
    <property type="entry name" value="TPR"/>
    <property type="match status" value="1"/>
</dbReference>
<dbReference type="PROSITE" id="PS50293">
    <property type="entry name" value="TPR_REGION"/>
    <property type="match status" value="1"/>
</dbReference>
<evidence type="ECO:0000269" key="1">
    <source>
    </source>
</evidence>
<evidence type="ECO:0000303" key="2">
    <source>
    </source>
</evidence>
<evidence type="ECO:0000305" key="3"/>
<protein>
    <recommendedName>
        <fullName>LRP2-binding protein</fullName>
    </recommendedName>
    <alternativeName>
        <fullName>Megalin-binding protein</fullName>
        <shortName>MegBP</shortName>
    </alternativeName>
</protein>
<sequence>MKLTSEKLPKNPFYASVSQYAAKNQKFFQWKKEKTDYTHANLVDKALQLLKERILKGDTLAYFLRGQLYFEEGWYEEALEQFEEIKEKDHQATYQLGVMYYDGLGTTLDAEKGVDYMKKILDSPCPKARHLKFAAAYNLGRAYYEGKGVKRSNEEAERLWLIAADNGNPKASVKAQSMLGLYYSTKEPKELEKAFYWHSEACGNGNLESQGALGLMYLYGQGIRQDTEAALQCLREAAERGNVYAQGNLVEYYYKMKFFTKCVAFSKRIADYDEVHDIPMIAQVTDCLPEFIGRGMAMASFYHARCLQLGLGITRDETTAKHYYSKACRLNPALADELHSLLIRQRI</sequence>
<accession>Q9P2M1</accession>
<accession>A6NJR7</accession>
<accession>A7E219</accession>
<accession>B3KX83</accession>
<accession>Q9NSN6</accession>
<reference key="1">
    <citation type="journal article" date="2000" name="DNA Res.">
        <title>Prediction of the coding sequences of unidentified human genes. XVI. The complete sequences of 150 new cDNA clones from brain which code for large proteins in vitro.</title>
        <authorList>
            <person name="Nagase T."/>
            <person name="Kikuno R."/>
            <person name="Ishikawa K."/>
            <person name="Hirosawa M."/>
            <person name="Ohara O."/>
        </authorList>
    </citation>
    <scope>NUCLEOTIDE SEQUENCE [LARGE SCALE MRNA] (ISOFORM 1)</scope>
    <source>
        <tissue>Brain</tissue>
    </source>
</reference>
<reference key="2">
    <citation type="journal article" date="2004" name="Nat. Genet.">
        <title>Complete sequencing and characterization of 21,243 full-length human cDNAs.</title>
        <authorList>
            <person name="Ota T."/>
            <person name="Suzuki Y."/>
            <person name="Nishikawa T."/>
            <person name="Otsuki T."/>
            <person name="Sugiyama T."/>
            <person name="Irie R."/>
            <person name="Wakamatsu A."/>
            <person name="Hayashi K."/>
            <person name="Sato H."/>
            <person name="Nagai K."/>
            <person name="Kimura K."/>
            <person name="Makita H."/>
            <person name="Sekine M."/>
            <person name="Obayashi M."/>
            <person name="Nishi T."/>
            <person name="Shibahara T."/>
            <person name="Tanaka T."/>
            <person name="Ishii S."/>
            <person name="Yamamoto J."/>
            <person name="Saito K."/>
            <person name="Kawai Y."/>
            <person name="Isono Y."/>
            <person name="Nakamura Y."/>
            <person name="Nagahari K."/>
            <person name="Murakami K."/>
            <person name="Yasuda T."/>
            <person name="Iwayanagi T."/>
            <person name="Wagatsuma M."/>
            <person name="Shiratori A."/>
            <person name="Sudo H."/>
            <person name="Hosoiri T."/>
            <person name="Kaku Y."/>
            <person name="Kodaira H."/>
            <person name="Kondo H."/>
            <person name="Sugawara M."/>
            <person name="Takahashi M."/>
            <person name="Kanda K."/>
            <person name="Yokoi T."/>
            <person name="Furuya T."/>
            <person name="Kikkawa E."/>
            <person name="Omura Y."/>
            <person name="Abe K."/>
            <person name="Kamihara K."/>
            <person name="Katsuta N."/>
            <person name="Sato K."/>
            <person name="Tanikawa M."/>
            <person name="Yamazaki M."/>
            <person name="Ninomiya K."/>
            <person name="Ishibashi T."/>
            <person name="Yamashita H."/>
            <person name="Murakawa K."/>
            <person name="Fujimori K."/>
            <person name="Tanai H."/>
            <person name="Kimata M."/>
            <person name="Watanabe M."/>
            <person name="Hiraoka S."/>
            <person name="Chiba Y."/>
            <person name="Ishida S."/>
            <person name="Ono Y."/>
            <person name="Takiguchi S."/>
            <person name="Watanabe S."/>
            <person name="Yosida M."/>
            <person name="Hotuta T."/>
            <person name="Kusano J."/>
            <person name="Kanehori K."/>
            <person name="Takahashi-Fujii A."/>
            <person name="Hara H."/>
            <person name="Tanase T.-O."/>
            <person name="Nomura Y."/>
            <person name="Togiya S."/>
            <person name="Komai F."/>
            <person name="Hara R."/>
            <person name="Takeuchi K."/>
            <person name="Arita M."/>
            <person name="Imose N."/>
            <person name="Musashino K."/>
            <person name="Yuuki H."/>
            <person name="Oshima A."/>
            <person name="Sasaki N."/>
            <person name="Aotsuka S."/>
            <person name="Yoshikawa Y."/>
            <person name="Matsunawa H."/>
            <person name="Ichihara T."/>
            <person name="Shiohata N."/>
            <person name="Sano S."/>
            <person name="Moriya S."/>
            <person name="Momiyama H."/>
            <person name="Satoh N."/>
            <person name="Takami S."/>
            <person name="Terashima Y."/>
            <person name="Suzuki O."/>
            <person name="Nakagawa S."/>
            <person name="Senoh A."/>
            <person name="Mizoguchi H."/>
            <person name="Goto Y."/>
            <person name="Shimizu F."/>
            <person name="Wakebe H."/>
            <person name="Hishigaki H."/>
            <person name="Watanabe T."/>
            <person name="Sugiyama A."/>
            <person name="Takemoto M."/>
            <person name="Kawakami B."/>
            <person name="Yamazaki M."/>
            <person name="Watanabe K."/>
            <person name="Kumagai A."/>
            <person name="Itakura S."/>
            <person name="Fukuzumi Y."/>
            <person name="Fujimori Y."/>
            <person name="Komiyama M."/>
            <person name="Tashiro H."/>
            <person name="Tanigami A."/>
            <person name="Fujiwara T."/>
            <person name="Ono T."/>
            <person name="Yamada K."/>
            <person name="Fujii Y."/>
            <person name="Ozaki K."/>
            <person name="Hirao M."/>
            <person name="Ohmori Y."/>
            <person name="Kawabata A."/>
            <person name="Hikiji T."/>
            <person name="Kobatake N."/>
            <person name="Inagaki H."/>
            <person name="Ikema Y."/>
            <person name="Okamoto S."/>
            <person name="Okitani R."/>
            <person name="Kawakami T."/>
            <person name="Noguchi S."/>
            <person name="Itoh T."/>
            <person name="Shigeta K."/>
            <person name="Senba T."/>
            <person name="Matsumura K."/>
            <person name="Nakajima Y."/>
            <person name="Mizuno T."/>
            <person name="Morinaga M."/>
            <person name="Sasaki M."/>
            <person name="Togashi T."/>
            <person name="Oyama M."/>
            <person name="Hata H."/>
            <person name="Watanabe M."/>
            <person name="Komatsu T."/>
            <person name="Mizushima-Sugano J."/>
            <person name="Satoh T."/>
            <person name="Shirai Y."/>
            <person name="Takahashi Y."/>
            <person name="Nakagawa K."/>
            <person name="Okumura K."/>
            <person name="Nagase T."/>
            <person name="Nomura N."/>
            <person name="Kikuchi H."/>
            <person name="Masuho Y."/>
            <person name="Yamashita R."/>
            <person name="Nakai K."/>
            <person name="Yada T."/>
            <person name="Nakamura Y."/>
            <person name="Ohara O."/>
            <person name="Isogai T."/>
            <person name="Sugano S."/>
        </authorList>
    </citation>
    <scope>NUCLEOTIDE SEQUENCE [LARGE SCALE MRNA] (ISOFORM 1)</scope>
    <source>
        <tissue>Brain</tissue>
    </source>
</reference>
<reference key="3">
    <citation type="journal article" date="2007" name="BMC Genomics">
        <title>The full-ORF clone resource of the German cDNA consortium.</title>
        <authorList>
            <person name="Bechtel S."/>
            <person name="Rosenfelder H."/>
            <person name="Duda A."/>
            <person name="Schmidt C.P."/>
            <person name="Ernst U."/>
            <person name="Wellenreuther R."/>
            <person name="Mehrle A."/>
            <person name="Schuster C."/>
            <person name="Bahr A."/>
            <person name="Bloecker H."/>
            <person name="Heubner D."/>
            <person name="Hoerlein A."/>
            <person name="Michel G."/>
            <person name="Wedler H."/>
            <person name="Koehrer K."/>
            <person name="Ottenwaelder B."/>
            <person name="Poustka A."/>
            <person name="Wiemann S."/>
            <person name="Schupp I."/>
        </authorList>
    </citation>
    <scope>NUCLEOTIDE SEQUENCE [LARGE SCALE MRNA] (ISOFORM 2)</scope>
    <source>
        <tissue>Amygdala</tissue>
    </source>
</reference>
<reference key="4">
    <citation type="journal article" date="2005" name="Nature">
        <title>Generation and annotation of the DNA sequences of human chromosomes 2 and 4.</title>
        <authorList>
            <person name="Hillier L.W."/>
            <person name="Graves T.A."/>
            <person name="Fulton R.S."/>
            <person name="Fulton L.A."/>
            <person name="Pepin K.H."/>
            <person name="Minx P."/>
            <person name="Wagner-McPherson C."/>
            <person name="Layman D."/>
            <person name="Wylie K."/>
            <person name="Sekhon M."/>
            <person name="Becker M.C."/>
            <person name="Fewell G.A."/>
            <person name="Delehaunty K.D."/>
            <person name="Miner T.L."/>
            <person name="Nash W.E."/>
            <person name="Kremitzki C."/>
            <person name="Oddy L."/>
            <person name="Du H."/>
            <person name="Sun H."/>
            <person name="Bradshaw-Cordum H."/>
            <person name="Ali J."/>
            <person name="Carter J."/>
            <person name="Cordes M."/>
            <person name="Harris A."/>
            <person name="Isak A."/>
            <person name="van Brunt A."/>
            <person name="Nguyen C."/>
            <person name="Du F."/>
            <person name="Courtney L."/>
            <person name="Kalicki J."/>
            <person name="Ozersky P."/>
            <person name="Abbott S."/>
            <person name="Armstrong J."/>
            <person name="Belter E.A."/>
            <person name="Caruso L."/>
            <person name="Cedroni M."/>
            <person name="Cotton M."/>
            <person name="Davidson T."/>
            <person name="Desai A."/>
            <person name="Elliott G."/>
            <person name="Erb T."/>
            <person name="Fronick C."/>
            <person name="Gaige T."/>
            <person name="Haakenson W."/>
            <person name="Haglund K."/>
            <person name="Holmes A."/>
            <person name="Harkins R."/>
            <person name="Kim K."/>
            <person name="Kruchowski S.S."/>
            <person name="Strong C.M."/>
            <person name="Grewal N."/>
            <person name="Goyea E."/>
            <person name="Hou S."/>
            <person name="Levy A."/>
            <person name="Martinka S."/>
            <person name="Mead K."/>
            <person name="McLellan M.D."/>
            <person name="Meyer R."/>
            <person name="Randall-Maher J."/>
            <person name="Tomlinson C."/>
            <person name="Dauphin-Kohlberg S."/>
            <person name="Kozlowicz-Reilly A."/>
            <person name="Shah N."/>
            <person name="Swearengen-Shahid S."/>
            <person name="Snider J."/>
            <person name="Strong J.T."/>
            <person name="Thompson J."/>
            <person name="Yoakum M."/>
            <person name="Leonard S."/>
            <person name="Pearman C."/>
            <person name="Trani L."/>
            <person name="Radionenko M."/>
            <person name="Waligorski J.E."/>
            <person name="Wang C."/>
            <person name="Rock S.M."/>
            <person name="Tin-Wollam A.-M."/>
            <person name="Maupin R."/>
            <person name="Latreille P."/>
            <person name="Wendl M.C."/>
            <person name="Yang S.-P."/>
            <person name="Pohl C."/>
            <person name="Wallis J.W."/>
            <person name="Spieth J."/>
            <person name="Bieri T.A."/>
            <person name="Berkowicz N."/>
            <person name="Nelson J.O."/>
            <person name="Osborne J."/>
            <person name="Ding L."/>
            <person name="Meyer R."/>
            <person name="Sabo A."/>
            <person name="Shotland Y."/>
            <person name="Sinha P."/>
            <person name="Wohldmann P.E."/>
            <person name="Cook L.L."/>
            <person name="Hickenbotham M.T."/>
            <person name="Eldred J."/>
            <person name="Williams D."/>
            <person name="Jones T.A."/>
            <person name="She X."/>
            <person name="Ciccarelli F.D."/>
            <person name="Izaurralde E."/>
            <person name="Taylor J."/>
            <person name="Schmutz J."/>
            <person name="Myers R.M."/>
            <person name="Cox D.R."/>
            <person name="Huang X."/>
            <person name="McPherson J.D."/>
            <person name="Mardis E.R."/>
            <person name="Clifton S.W."/>
            <person name="Warren W.C."/>
            <person name="Chinwalla A.T."/>
            <person name="Eddy S.R."/>
            <person name="Marra M.A."/>
            <person name="Ovcharenko I."/>
            <person name="Furey T.S."/>
            <person name="Miller W."/>
            <person name="Eichler E.E."/>
            <person name="Bork P."/>
            <person name="Suyama M."/>
            <person name="Torrents D."/>
            <person name="Waterston R.H."/>
            <person name="Wilson R.K."/>
        </authorList>
    </citation>
    <scope>NUCLEOTIDE SEQUENCE [LARGE SCALE GENOMIC DNA]</scope>
</reference>
<reference key="5">
    <citation type="submission" date="2005-09" db="EMBL/GenBank/DDBJ databases">
        <authorList>
            <person name="Mural R.J."/>
            <person name="Istrail S."/>
            <person name="Sutton G.G."/>
            <person name="Florea L."/>
            <person name="Halpern A.L."/>
            <person name="Mobarry C.M."/>
            <person name="Lippert R."/>
            <person name="Walenz B."/>
            <person name="Shatkay H."/>
            <person name="Dew I."/>
            <person name="Miller J.R."/>
            <person name="Flanigan M.J."/>
            <person name="Edwards N.J."/>
            <person name="Bolanos R."/>
            <person name="Fasulo D."/>
            <person name="Halldorsson B.V."/>
            <person name="Hannenhalli S."/>
            <person name="Turner R."/>
            <person name="Yooseph S."/>
            <person name="Lu F."/>
            <person name="Nusskern D.R."/>
            <person name="Shue B.C."/>
            <person name="Zheng X.H."/>
            <person name="Zhong F."/>
            <person name="Delcher A.L."/>
            <person name="Huson D.H."/>
            <person name="Kravitz S.A."/>
            <person name="Mouchard L."/>
            <person name="Reinert K."/>
            <person name="Remington K.A."/>
            <person name="Clark A.G."/>
            <person name="Waterman M.S."/>
            <person name="Eichler E.E."/>
            <person name="Adams M.D."/>
            <person name="Hunkapiller M.W."/>
            <person name="Myers E.W."/>
            <person name="Venter J.C."/>
        </authorList>
    </citation>
    <scope>NUCLEOTIDE SEQUENCE [LARGE SCALE GENOMIC DNA]</scope>
</reference>
<reference key="6">
    <citation type="journal article" date="2004" name="Genome Res.">
        <title>The status, quality, and expansion of the NIH full-length cDNA project: the Mammalian Gene Collection (MGC).</title>
        <authorList>
            <consortium name="The MGC Project Team"/>
        </authorList>
    </citation>
    <scope>NUCLEOTIDE SEQUENCE [LARGE SCALE MRNA] (ISOFORM 1)</scope>
</reference>
<reference key="7">
    <citation type="journal article" date="2003" name="J. Cell Sci.">
        <title>Functional interaction of megalin with the megalin-binding protein (MegBP), a novel tetratrico peptide repeat-containing adaptor molecule.</title>
        <authorList>
            <person name="Petersen H.H."/>
            <person name="Hilpert J."/>
            <person name="Militz D."/>
            <person name="Zandler V."/>
            <person name="Jacobsen C."/>
            <person name="Roebroek A.J.M."/>
            <person name="Willnow T.E."/>
        </authorList>
    </citation>
    <scope>SUBCELLULAR LOCATION</scope>
    <scope>INTERACTION WITH LRP2</scope>
</reference>
<proteinExistence type="evidence at protein level"/>
<keyword id="KW-0025">Alternative splicing</keyword>
<keyword id="KW-0963">Cytoplasm</keyword>
<keyword id="KW-1267">Proteomics identification</keyword>
<keyword id="KW-1185">Reference proteome</keyword>
<keyword id="KW-0677">Repeat</keyword>
<keyword id="KW-0802">TPR repeat</keyword>
<gene>
    <name type="primary">LRP2BP</name>
    <name type="synonym">KIAA1325</name>
</gene>
<comment type="function">
    <text>May act as an adapter that regulates LRP2 function.</text>
</comment>
<comment type="subunit">
    <text evidence="1">Interacts with LRP2.</text>
</comment>
<comment type="interaction">
    <interactant intactId="EBI-18273118">
        <id>Q9P2M1</id>
    </interactant>
    <interactant intactId="EBI-2874661">
        <id>Q9BV19</id>
        <label>C1orf50</label>
    </interactant>
    <organismsDiffer>false</organismsDiffer>
    <experiments>3</experiments>
</comment>
<comment type="interaction">
    <interactant intactId="EBI-18273118">
        <id>Q9P2M1</id>
    </interactant>
    <interactant intactId="EBI-1104933">
        <id>Q8N4L8</id>
        <label>CCDC24</label>
    </interactant>
    <organismsDiffer>false</organismsDiffer>
    <experiments>3</experiments>
</comment>
<comment type="interaction">
    <interactant intactId="EBI-18273118">
        <id>Q9P2M1</id>
    </interactant>
    <interactant intactId="EBI-3919850">
        <id>Q8IVW4</id>
        <label>CDKL3</label>
    </interactant>
    <organismsDiffer>false</organismsDiffer>
    <experiments>3</experiments>
</comment>
<comment type="interaction">
    <interactant intactId="EBI-18273118">
        <id>Q9P2M1</id>
    </interactant>
    <interactant intactId="EBI-375077">
        <id>P38936</id>
        <label>CDKN1A</label>
    </interactant>
    <organismsDiffer>false</organismsDiffer>
    <experiments>3</experiments>
</comment>
<comment type="interaction">
    <interactant intactId="EBI-18273118">
        <id>Q9P2M1</id>
    </interactant>
    <interactant intactId="EBI-740376">
        <id>Q86UW9</id>
        <label>DTX2</label>
    </interactant>
    <organismsDiffer>false</organismsDiffer>
    <experiments>3</experiments>
</comment>
<comment type="interaction">
    <interactant intactId="EBI-18273118">
        <id>Q9P2M1</id>
    </interactant>
    <interactant intactId="EBI-12013806">
        <id>Q6NZ36-4</id>
        <label>FAAP20</label>
    </interactant>
    <organismsDiffer>false</organismsDiffer>
    <experiments>3</experiments>
</comment>
<comment type="interaction">
    <interactant intactId="EBI-18273118">
        <id>Q9P2M1</id>
    </interactant>
    <interactant intactId="EBI-6658203">
        <id>Q86YD7</id>
        <label>FAM90A1</label>
    </interactant>
    <organismsDiffer>false</organismsDiffer>
    <experiments>3</experiments>
</comment>
<comment type="interaction">
    <interactant intactId="EBI-18273118">
        <id>Q9P2M1</id>
    </interactant>
    <interactant intactId="EBI-7960826">
        <id>Q8NHY3</id>
        <label>GAS2L2</label>
    </interactant>
    <organismsDiffer>false</organismsDiffer>
    <experiments>3</experiments>
</comment>
<comment type="interaction">
    <interactant intactId="EBI-18273118">
        <id>Q9P2M1</id>
    </interactant>
    <interactant intactId="EBI-744104">
        <id>P55040</id>
        <label>GEM</label>
    </interactant>
    <organismsDiffer>false</organismsDiffer>
    <experiments>3</experiments>
</comment>
<comment type="interaction">
    <interactant intactId="EBI-18273118">
        <id>Q9P2M1</id>
    </interactant>
    <interactant intactId="EBI-746309">
        <id>Q92917</id>
        <label>GPKOW</label>
    </interactant>
    <organismsDiffer>false</organismsDiffer>
    <experiments>3</experiments>
</comment>
<comment type="interaction">
    <interactant intactId="EBI-18273118">
        <id>Q9P2M1</id>
    </interactant>
    <interactant intactId="EBI-353467">
        <id>P09211</id>
        <label>GSTP1</label>
    </interactant>
    <organismsDiffer>false</organismsDiffer>
    <experiments>3</experiments>
</comment>
<comment type="interaction">
    <interactant intactId="EBI-18273118">
        <id>Q9P2M1</id>
    </interactant>
    <interactant intactId="EBI-8770084">
        <id>P30711</id>
        <label>GSTT1</label>
    </interactant>
    <organismsDiffer>false</organismsDiffer>
    <experiments>2</experiments>
</comment>
<comment type="interaction">
    <interactant intactId="EBI-18273118">
        <id>Q9P2M1</id>
    </interactant>
    <interactant intactId="EBI-1752118">
        <id>P31273</id>
        <label>HOXC8</label>
    </interactant>
    <organismsDiffer>false</organismsDiffer>
    <experiments>3</experiments>
</comment>
<comment type="interaction">
    <interactant intactId="EBI-18273118">
        <id>Q9P2M1</id>
    </interactant>
    <interactant intactId="EBI-726510">
        <id>Q96BZ8</id>
        <label>LENG1</label>
    </interactant>
    <organismsDiffer>false</organismsDiffer>
    <experiments>3</experiments>
</comment>
<comment type="interaction">
    <interactant intactId="EBI-18273118">
        <id>Q9P2M1</id>
    </interactant>
    <interactant intactId="EBI-10181968">
        <id>Q7Z4N8</id>
        <label>P4HA3</label>
    </interactant>
    <organismsDiffer>false</organismsDiffer>
    <experiments>3</experiments>
</comment>
<comment type="interaction">
    <interactant intactId="EBI-18273118">
        <id>Q9P2M1</id>
    </interactant>
    <interactant intactId="EBI-744685">
        <id>Q14088</id>
        <label>RAB33A</label>
    </interactant>
    <organismsDiffer>false</organismsDiffer>
    <experiments>3</experiments>
</comment>
<comment type="interaction">
    <interactant intactId="EBI-18273118">
        <id>Q9P2M1</id>
    </interactant>
    <interactant intactId="EBI-748391">
        <id>Q9BWG6</id>
        <label>SCNM1</label>
    </interactant>
    <organismsDiffer>false</organismsDiffer>
    <experiments>3</experiments>
</comment>
<comment type="interaction">
    <interactant intactId="EBI-18273118">
        <id>Q9P2M1</id>
    </interactant>
    <interactant intactId="EBI-355653">
        <id>Q92922</id>
        <label>SMARCC1</label>
    </interactant>
    <organismsDiffer>false</organismsDiffer>
    <experiments>3</experiments>
</comment>
<comment type="interaction">
    <interactant intactId="EBI-18273118">
        <id>Q9P2M1</id>
    </interactant>
    <interactant intactId="EBI-6427977">
        <id>Q96SQ5</id>
        <label>ZNF587</label>
    </interactant>
    <organismsDiffer>false</organismsDiffer>
    <experiments>3</experiments>
</comment>
<comment type="subcellular location">
    <subcellularLocation>
        <location evidence="1">Cytoplasm</location>
    </subcellularLocation>
    <text>Detected in a vesicular staining pattern close to the plasma membrane and throughout the cytoplasm.</text>
</comment>
<comment type="alternative products">
    <event type="alternative splicing"/>
    <isoform>
        <id>Q9P2M1-1</id>
        <name>1</name>
        <sequence type="displayed"/>
    </isoform>
    <isoform>
        <id>Q9P2M1-2</id>
        <name>2</name>
        <sequence type="described" ref="VSP_030664"/>
    </isoform>
</comment>
<comment type="sequence caution" evidence="3">
    <conflict type="erroneous initiation">
        <sequence resource="EMBL-CDS" id="BAA92563"/>
    </conflict>
</comment>
<feature type="chain" id="PRO_0000315707" description="LRP2-binding protein">
    <location>
        <begin position="1"/>
        <end position="347"/>
    </location>
</feature>
<feature type="repeat" description="TPR">
    <location>
        <begin position="59"/>
        <end position="92"/>
    </location>
</feature>
<feature type="repeat" description="Sel1-like 1">
    <location>
        <begin position="93"/>
        <end position="125"/>
    </location>
</feature>
<feature type="repeat" description="Sel1-like 2">
    <location>
        <begin position="133"/>
        <end position="168"/>
    </location>
</feature>
<feature type="repeat" description="Sel1-like 3">
    <location>
        <begin position="173"/>
        <end position="206"/>
    </location>
</feature>
<feature type="repeat" description="Sel1-like 4">
    <location>
        <begin position="207"/>
        <end position="242"/>
    </location>
</feature>
<feature type="repeat" description="Sel1-like 5">
    <location>
        <begin position="243"/>
        <end position="277"/>
    </location>
</feature>
<feature type="repeat" description="Sel1-like 6">
    <location>
        <begin position="297"/>
        <end position="332"/>
    </location>
</feature>
<feature type="splice variant" id="VSP_030664" description="In isoform 2." evidence="2">
    <original>T</original>
    <variation>TKS</variation>
    <location>
        <position position="35"/>
    </location>
</feature>